<feature type="chain" id="PRO_1000078838" description="Phenylalanine--tRNA ligase alpha subunit">
    <location>
        <begin position="1"/>
        <end position="339"/>
    </location>
</feature>
<feature type="binding site" evidence="1">
    <location>
        <position position="250"/>
    </location>
    <ligand>
        <name>Mg(2+)</name>
        <dbReference type="ChEBI" id="CHEBI:18420"/>
        <note>shared with beta subunit</note>
    </ligand>
</feature>
<organism>
    <name type="scientific">Flavobacterium johnsoniae (strain ATCC 17061 / DSM 2064 / JCM 8514 / BCRC 14874 / CCUG 350202 / NBRC 14942 / NCIMB 11054 / UW101)</name>
    <name type="common">Cytophaga johnsonae</name>
    <dbReference type="NCBI Taxonomy" id="376686"/>
    <lineage>
        <taxon>Bacteria</taxon>
        <taxon>Pseudomonadati</taxon>
        <taxon>Bacteroidota</taxon>
        <taxon>Flavobacteriia</taxon>
        <taxon>Flavobacteriales</taxon>
        <taxon>Flavobacteriaceae</taxon>
        <taxon>Flavobacterium</taxon>
    </lineage>
</organism>
<proteinExistence type="inferred from homology"/>
<evidence type="ECO:0000255" key="1">
    <source>
        <dbReference type="HAMAP-Rule" id="MF_00281"/>
    </source>
</evidence>
<protein>
    <recommendedName>
        <fullName evidence="1">Phenylalanine--tRNA ligase alpha subunit</fullName>
        <ecNumber evidence="1">6.1.1.20</ecNumber>
    </recommendedName>
    <alternativeName>
        <fullName evidence="1">Phenylalanyl-tRNA synthetase alpha subunit</fullName>
        <shortName evidence="1">PheRS</shortName>
    </alternativeName>
</protein>
<reference key="1">
    <citation type="journal article" date="2009" name="Appl. Environ. Microbiol.">
        <title>Novel features of the polysaccharide-digesting gliding bacterium Flavobacterium johnsoniae as revealed by genome sequence analysis.</title>
        <authorList>
            <person name="McBride M.J."/>
            <person name="Xie G."/>
            <person name="Martens E.C."/>
            <person name="Lapidus A."/>
            <person name="Henrissat B."/>
            <person name="Rhodes R.G."/>
            <person name="Goltsman E."/>
            <person name="Wang W."/>
            <person name="Xu J."/>
            <person name="Hunnicutt D.W."/>
            <person name="Staroscik A.M."/>
            <person name="Hoover T.R."/>
            <person name="Cheng Y.Q."/>
            <person name="Stein J.L."/>
        </authorList>
    </citation>
    <scope>NUCLEOTIDE SEQUENCE [LARGE SCALE GENOMIC DNA]</scope>
    <source>
        <strain>ATCC 17061 / DSM 2064 / JCM 8514 / BCRC 14874 / CCUG 350202 / NBRC 14942 / NCIMB 11054 / UW101</strain>
    </source>
</reference>
<dbReference type="EC" id="6.1.1.20" evidence="1"/>
<dbReference type="EMBL" id="CP000685">
    <property type="protein sequence ID" value="ABQ03802.1"/>
    <property type="molecule type" value="Genomic_DNA"/>
</dbReference>
<dbReference type="RefSeq" id="WP_012022856.1">
    <property type="nucleotide sequence ID" value="NZ_MUGZ01000001.1"/>
</dbReference>
<dbReference type="SMR" id="A5FLW1"/>
<dbReference type="STRING" id="376686.Fjoh_0768"/>
<dbReference type="KEGG" id="fjo:Fjoh_0768"/>
<dbReference type="eggNOG" id="COG0016">
    <property type="taxonomic scope" value="Bacteria"/>
</dbReference>
<dbReference type="HOGENOM" id="CLU_025086_0_1_10"/>
<dbReference type="OrthoDB" id="9800719at2"/>
<dbReference type="Proteomes" id="UP000006694">
    <property type="component" value="Chromosome"/>
</dbReference>
<dbReference type="GO" id="GO:0005737">
    <property type="term" value="C:cytoplasm"/>
    <property type="evidence" value="ECO:0007669"/>
    <property type="project" value="UniProtKB-SubCell"/>
</dbReference>
<dbReference type="GO" id="GO:0005524">
    <property type="term" value="F:ATP binding"/>
    <property type="evidence" value="ECO:0007669"/>
    <property type="project" value="UniProtKB-UniRule"/>
</dbReference>
<dbReference type="GO" id="GO:0000287">
    <property type="term" value="F:magnesium ion binding"/>
    <property type="evidence" value="ECO:0007669"/>
    <property type="project" value="UniProtKB-UniRule"/>
</dbReference>
<dbReference type="GO" id="GO:0004826">
    <property type="term" value="F:phenylalanine-tRNA ligase activity"/>
    <property type="evidence" value="ECO:0007669"/>
    <property type="project" value="UniProtKB-UniRule"/>
</dbReference>
<dbReference type="GO" id="GO:0000049">
    <property type="term" value="F:tRNA binding"/>
    <property type="evidence" value="ECO:0007669"/>
    <property type="project" value="InterPro"/>
</dbReference>
<dbReference type="GO" id="GO:0006432">
    <property type="term" value="P:phenylalanyl-tRNA aminoacylation"/>
    <property type="evidence" value="ECO:0007669"/>
    <property type="project" value="UniProtKB-UniRule"/>
</dbReference>
<dbReference type="CDD" id="cd00496">
    <property type="entry name" value="PheRS_alpha_core"/>
    <property type="match status" value="1"/>
</dbReference>
<dbReference type="Gene3D" id="3.30.930.10">
    <property type="entry name" value="Bira Bifunctional Protein, Domain 2"/>
    <property type="match status" value="1"/>
</dbReference>
<dbReference type="HAMAP" id="MF_00281">
    <property type="entry name" value="Phe_tRNA_synth_alpha1"/>
    <property type="match status" value="1"/>
</dbReference>
<dbReference type="InterPro" id="IPR006195">
    <property type="entry name" value="aa-tRNA-synth_II"/>
</dbReference>
<dbReference type="InterPro" id="IPR045864">
    <property type="entry name" value="aa-tRNA-synth_II/BPL/LPL"/>
</dbReference>
<dbReference type="InterPro" id="IPR004529">
    <property type="entry name" value="Phe-tRNA-synth_IIc_asu"/>
</dbReference>
<dbReference type="InterPro" id="IPR004188">
    <property type="entry name" value="Phe-tRNA_ligase_II_N"/>
</dbReference>
<dbReference type="InterPro" id="IPR022911">
    <property type="entry name" value="Phe_tRNA_ligase_alpha1_bac"/>
</dbReference>
<dbReference type="InterPro" id="IPR002319">
    <property type="entry name" value="Phenylalanyl-tRNA_Synthase"/>
</dbReference>
<dbReference type="InterPro" id="IPR010978">
    <property type="entry name" value="tRNA-bd_arm"/>
</dbReference>
<dbReference type="NCBIfam" id="TIGR00468">
    <property type="entry name" value="pheS"/>
    <property type="match status" value="1"/>
</dbReference>
<dbReference type="PANTHER" id="PTHR11538:SF41">
    <property type="entry name" value="PHENYLALANINE--TRNA LIGASE, MITOCHONDRIAL"/>
    <property type="match status" value="1"/>
</dbReference>
<dbReference type="PANTHER" id="PTHR11538">
    <property type="entry name" value="PHENYLALANYL-TRNA SYNTHETASE"/>
    <property type="match status" value="1"/>
</dbReference>
<dbReference type="Pfam" id="PF02912">
    <property type="entry name" value="Phe_tRNA-synt_N"/>
    <property type="match status" value="1"/>
</dbReference>
<dbReference type="Pfam" id="PF01409">
    <property type="entry name" value="tRNA-synt_2d"/>
    <property type="match status" value="1"/>
</dbReference>
<dbReference type="SUPFAM" id="SSF55681">
    <property type="entry name" value="Class II aaRS and biotin synthetases"/>
    <property type="match status" value="1"/>
</dbReference>
<dbReference type="SUPFAM" id="SSF46589">
    <property type="entry name" value="tRNA-binding arm"/>
    <property type="match status" value="1"/>
</dbReference>
<dbReference type="PROSITE" id="PS50862">
    <property type="entry name" value="AA_TRNA_LIGASE_II"/>
    <property type="match status" value="1"/>
</dbReference>
<gene>
    <name evidence="1" type="primary">pheS</name>
    <name type="ordered locus">Fjoh_0768</name>
</gene>
<comment type="catalytic activity">
    <reaction evidence="1">
        <text>tRNA(Phe) + L-phenylalanine + ATP = L-phenylalanyl-tRNA(Phe) + AMP + diphosphate + H(+)</text>
        <dbReference type="Rhea" id="RHEA:19413"/>
        <dbReference type="Rhea" id="RHEA-COMP:9668"/>
        <dbReference type="Rhea" id="RHEA-COMP:9699"/>
        <dbReference type="ChEBI" id="CHEBI:15378"/>
        <dbReference type="ChEBI" id="CHEBI:30616"/>
        <dbReference type="ChEBI" id="CHEBI:33019"/>
        <dbReference type="ChEBI" id="CHEBI:58095"/>
        <dbReference type="ChEBI" id="CHEBI:78442"/>
        <dbReference type="ChEBI" id="CHEBI:78531"/>
        <dbReference type="ChEBI" id="CHEBI:456215"/>
        <dbReference type="EC" id="6.1.1.20"/>
    </reaction>
</comment>
<comment type="cofactor">
    <cofactor evidence="1">
        <name>Mg(2+)</name>
        <dbReference type="ChEBI" id="CHEBI:18420"/>
    </cofactor>
    <text evidence="1">Binds 2 magnesium ions per tetramer.</text>
</comment>
<comment type="subunit">
    <text evidence="1">Tetramer of two alpha and two beta subunits.</text>
</comment>
<comment type="subcellular location">
    <subcellularLocation>
        <location evidence="1">Cytoplasm</location>
    </subcellularLocation>
</comment>
<comment type="similarity">
    <text evidence="1">Belongs to the class-II aminoacyl-tRNA synthetase family. Phe-tRNA synthetase alpha subunit type 1 subfamily.</text>
</comment>
<name>SYFA_FLAJ1</name>
<keyword id="KW-0030">Aminoacyl-tRNA synthetase</keyword>
<keyword id="KW-0067">ATP-binding</keyword>
<keyword id="KW-0963">Cytoplasm</keyword>
<keyword id="KW-0436">Ligase</keyword>
<keyword id="KW-0460">Magnesium</keyword>
<keyword id="KW-0479">Metal-binding</keyword>
<keyword id="KW-0547">Nucleotide-binding</keyword>
<keyword id="KW-0648">Protein biosynthesis</keyword>
<sequence length="339" mass="39180">MIDKIKQHIEEAKAFNEKNKESLEQFRIKYLGSKGLLKELFNEFKNIPNDQKKDFGQVINTLKAVAEEKVKQIQEELESKEESKGVFGDLTRAAEPVIIGSRHPISIVKNQIIDIFANIGFNVSEGPEIEDDWHNFTALNLPEYHPARDMQDTFFIQTNPDVLLRTHTSSVQVRYMENHKPPIRTISPGRVFRNEAISSRSHCIFHQVEGLYIDKDVSFADLKQTLLYFTKEMFGKSKIRLRPSYFPFTEPSAEIDIYWGLKTETDYRITKGTGWLEIGGCGMVDPNVLKNCDINPDEYNGFAFGMGVERIAMLLYQIGDIRMFYENDVRFLEQFKANI</sequence>
<accession>A5FLW1</accession>